<keyword id="KW-0002">3D-structure</keyword>
<keyword id="KW-0028">Amino-acid biosynthesis</keyword>
<keyword id="KW-0057">Aromatic amino acid biosynthesis</keyword>
<keyword id="KW-0328">Glycosyltransferase</keyword>
<keyword id="KW-0460">Magnesium</keyword>
<keyword id="KW-0479">Metal-binding</keyword>
<keyword id="KW-1185">Reference proteome</keyword>
<keyword id="KW-0808">Transferase</keyword>
<keyword id="KW-0822">Tryptophan biosynthesis</keyword>
<comment type="function">
    <text evidence="1">Catalyzes the transfer of the phosphoribosyl group of 5-phosphorylribose-1-pyrophosphate (PRPP) to anthranilate to yield N-(5'-phosphoribosyl)-anthranilate (PRA).</text>
</comment>
<comment type="catalytic activity">
    <reaction evidence="1">
        <text>N-(5-phospho-beta-D-ribosyl)anthranilate + diphosphate = 5-phospho-alpha-D-ribose 1-diphosphate + anthranilate</text>
        <dbReference type="Rhea" id="RHEA:11768"/>
        <dbReference type="ChEBI" id="CHEBI:16567"/>
        <dbReference type="ChEBI" id="CHEBI:18277"/>
        <dbReference type="ChEBI" id="CHEBI:33019"/>
        <dbReference type="ChEBI" id="CHEBI:58017"/>
        <dbReference type="EC" id="2.4.2.18"/>
    </reaction>
</comment>
<comment type="cofactor">
    <cofactor evidence="1">
        <name>Mg(2+)</name>
        <dbReference type="ChEBI" id="CHEBI:18420"/>
    </cofactor>
    <text evidence="1">Binds 2 magnesium ions per monomer.</text>
</comment>
<comment type="pathway">
    <text evidence="1">Amino-acid biosynthesis; L-tryptophan biosynthesis; L-tryptophan from chorismate: step 2/5.</text>
</comment>
<comment type="subunit">
    <text evidence="1 2">Homodimer.</text>
</comment>
<comment type="similarity">
    <text evidence="1">Belongs to the anthranilate phosphoribosyltransferase family.</text>
</comment>
<feature type="chain" id="PRO_0000154503" description="Anthranilate phosphoribosyltransferase">
    <location>
        <begin position="1"/>
        <end position="345"/>
    </location>
</feature>
<feature type="binding site" evidence="1">
    <location>
        <position position="84"/>
    </location>
    <ligand>
        <name>5-phospho-alpha-D-ribose 1-diphosphate</name>
        <dbReference type="ChEBI" id="CHEBI:58017"/>
    </ligand>
</feature>
<feature type="binding site" evidence="1">
    <location>
        <position position="84"/>
    </location>
    <ligand>
        <name>anthranilate</name>
        <dbReference type="ChEBI" id="CHEBI:16567"/>
        <label>1</label>
    </ligand>
</feature>
<feature type="binding site" evidence="1">
    <location>
        <begin position="87"/>
        <end position="88"/>
    </location>
    <ligand>
        <name>5-phospho-alpha-D-ribose 1-diphosphate</name>
        <dbReference type="ChEBI" id="CHEBI:58017"/>
    </ligand>
</feature>
<feature type="binding site" evidence="1">
    <location>
        <position position="92"/>
    </location>
    <ligand>
        <name>5-phospho-alpha-D-ribose 1-diphosphate</name>
        <dbReference type="ChEBI" id="CHEBI:58017"/>
    </ligand>
</feature>
<feature type="binding site">
    <location>
        <begin position="94"/>
        <end position="97"/>
    </location>
    <ligand>
        <name>5-phospho-alpha-D-ribose 1-diphosphate</name>
        <dbReference type="ChEBI" id="CHEBI:58017"/>
    </ligand>
</feature>
<feature type="binding site" evidence="1">
    <location>
        <position position="96"/>
    </location>
    <ligand>
        <name>Mg(2+)</name>
        <dbReference type="ChEBI" id="CHEBI:18420"/>
        <label>1</label>
    </ligand>
</feature>
<feature type="binding site">
    <location>
        <begin position="112"/>
        <end position="120"/>
    </location>
    <ligand>
        <name>5-phospho-alpha-D-ribose 1-diphosphate</name>
        <dbReference type="ChEBI" id="CHEBI:58017"/>
    </ligand>
</feature>
<feature type="binding site" evidence="1">
    <location>
        <position position="115"/>
    </location>
    <ligand>
        <name>anthranilate</name>
        <dbReference type="ChEBI" id="CHEBI:16567"/>
        <label>1</label>
    </ligand>
</feature>
<feature type="binding site" evidence="1">
    <location>
        <position position="124"/>
    </location>
    <ligand>
        <name>5-phospho-alpha-D-ribose 1-diphosphate</name>
        <dbReference type="ChEBI" id="CHEBI:58017"/>
    </ligand>
</feature>
<feature type="binding site" evidence="1">
    <location>
        <position position="170"/>
    </location>
    <ligand>
        <name>anthranilate</name>
        <dbReference type="ChEBI" id="CHEBI:16567"/>
        <label>2</label>
    </ligand>
</feature>
<feature type="binding site" evidence="1">
    <location>
        <position position="229"/>
    </location>
    <ligand>
        <name>Mg(2+)</name>
        <dbReference type="ChEBI" id="CHEBI:18420"/>
        <label>2</label>
    </ligand>
</feature>
<feature type="binding site" evidence="1">
    <location>
        <position position="230"/>
    </location>
    <ligand>
        <name>Mg(2+)</name>
        <dbReference type="ChEBI" id="CHEBI:18420"/>
        <label>1</label>
    </ligand>
</feature>
<feature type="binding site" evidence="1">
    <location>
        <position position="230"/>
    </location>
    <ligand>
        <name>Mg(2+)</name>
        <dbReference type="ChEBI" id="CHEBI:18420"/>
        <label>2</label>
    </ligand>
</feature>
<feature type="helix" evidence="3">
    <location>
        <begin position="5"/>
        <end position="13"/>
    </location>
</feature>
<feature type="helix" evidence="3">
    <location>
        <begin position="20"/>
        <end position="31"/>
    </location>
</feature>
<feature type="helix" evidence="3">
    <location>
        <begin position="37"/>
        <end position="50"/>
    </location>
</feature>
<feature type="helix" evidence="3">
    <location>
        <begin position="54"/>
        <end position="67"/>
    </location>
</feature>
<feature type="strand" evidence="3">
    <location>
        <begin position="79"/>
        <end position="83"/>
    </location>
</feature>
<feature type="helix" evidence="3">
    <location>
        <begin position="95"/>
        <end position="105"/>
    </location>
</feature>
<feature type="strand" evidence="3">
    <location>
        <begin position="109"/>
        <end position="114"/>
    </location>
</feature>
<feature type="helix" evidence="3">
    <location>
        <begin position="125"/>
        <end position="129"/>
    </location>
</feature>
<feature type="turn" evidence="3">
    <location>
        <begin position="130"/>
        <end position="132"/>
    </location>
</feature>
<feature type="helix" evidence="3">
    <location>
        <begin position="139"/>
        <end position="149"/>
    </location>
</feature>
<feature type="strand" evidence="3">
    <location>
        <begin position="150"/>
        <end position="155"/>
    </location>
</feature>
<feature type="helix" evidence="3">
    <location>
        <begin position="156"/>
        <end position="159"/>
    </location>
</feature>
<feature type="helix" evidence="3">
    <location>
        <begin position="161"/>
        <end position="165"/>
    </location>
</feature>
<feature type="helix" evidence="3">
    <location>
        <begin position="167"/>
        <end position="173"/>
    </location>
</feature>
<feature type="helix" evidence="3">
    <location>
        <begin position="179"/>
        <end position="182"/>
    </location>
</feature>
<feature type="helix" evidence="3">
    <location>
        <begin position="183"/>
        <end position="185"/>
    </location>
</feature>
<feature type="strand" evidence="3">
    <location>
        <begin position="192"/>
        <end position="197"/>
    </location>
</feature>
<feature type="helix" evidence="3">
    <location>
        <begin position="202"/>
        <end position="213"/>
    </location>
</feature>
<feature type="strand" evidence="3">
    <location>
        <begin position="217"/>
        <end position="224"/>
    </location>
</feature>
<feature type="turn" evidence="3">
    <location>
        <begin position="225"/>
        <end position="227"/>
    </location>
</feature>
<feature type="strand" evidence="3">
    <location>
        <begin position="228"/>
        <end position="230"/>
    </location>
</feature>
<feature type="strand" evidence="3">
    <location>
        <begin position="233"/>
        <end position="235"/>
    </location>
</feature>
<feature type="strand" evidence="3">
    <location>
        <begin position="237"/>
        <end position="243"/>
    </location>
</feature>
<feature type="strand" evidence="3">
    <location>
        <begin position="246"/>
        <end position="252"/>
    </location>
</feature>
<feature type="helix" evidence="3">
    <location>
        <begin position="254"/>
        <end position="257"/>
    </location>
</feature>
<feature type="helix" evidence="3">
    <location>
        <begin position="264"/>
        <end position="266"/>
    </location>
</feature>
<feature type="helix" evidence="3">
    <location>
        <begin position="275"/>
        <end position="283"/>
    </location>
</feature>
<feature type="helix" evidence="3">
    <location>
        <begin position="289"/>
        <end position="304"/>
    </location>
</feature>
<feature type="strand" evidence="3">
    <location>
        <begin position="307"/>
        <end position="310"/>
    </location>
</feature>
<feature type="helix" evidence="3">
    <location>
        <begin position="311"/>
        <end position="323"/>
    </location>
</feature>
<feature type="helix" evidence="3">
    <location>
        <begin position="326"/>
        <end position="341"/>
    </location>
</feature>
<protein>
    <recommendedName>
        <fullName evidence="1">Anthranilate phosphoribosyltransferase</fullName>
        <ecNumber evidence="1">2.4.2.18</ecNumber>
    </recommendedName>
</protein>
<proteinExistence type="evidence at protein level"/>
<gene>
    <name evidence="1" type="primary">trpD</name>
    <name type="ordered locus">XCC0469</name>
</gene>
<evidence type="ECO:0000255" key="1">
    <source>
        <dbReference type="HAMAP-Rule" id="MF_00211"/>
    </source>
</evidence>
<evidence type="ECO:0000269" key="2">
    <source ref="2"/>
</evidence>
<evidence type="ECO:0007829" key="3">
    <source>
        <dbReference type="PDB" id="4HKM"/>
    </source>
</evidence>
<name>TRPD_XANCP</name>
<sequence>MPITPQQALQRTIEHREIFHDEMVDLMRQIMRGEVSDAMVSAILTGLRVKKETIGEIAGAATVMREFSRRVEVTDRRHMVDIVGTGGDGSHTFNISTCAMFVAAAGGAKVAKHGNRSVSSKSGSADALEALGAVIELQPEQVAASLAQTGIGFMYAPVHHPAMKVVAPVRREMGVRTIFNILGPLTNPAGSPNILMGVFHPDLVGIQARVLQELGAERALVVWGRDGMDELSLGAGTLVGELRDGQVHEYEVHPEDFGIAMSASRNLKVADAAESRAMLLQVLDNVPGPALDIVALNAGAALYVAGVADSIADGIVRARQVLADGSARACLDAYVAFTQQATAQG</sequence>
<organism>
    <name type="scientific">Xanthomonas campestris pv. campestris (strain ATCC 33913 / DSM 3586 / NCPPB 528 / LMG 568 / P 25)</name>
    <dbReference type="NCBI Taxonomy" id="190485"/>
    <lineage>
        <taxon>Bacteria</taxon>
        <taxon>Pseudomonadati</taxon>
        <taxon>Pseudomonadota</taxon>
        <taxon>Gammaproteobacteria</taxon>
        <taxon>Lysobacterales</taxon>
        <taxon>Lysobacteraceae</taxon>
        <taxon>Xanthomonas</taxon>
    </lineage>
</organism>
<dbReference type="EC" id="2.4.2.18" evidence="1"/>
<dbReference type="EMBL" id="AE008922">
    <property type="protein sequence ID" value="AAM39787.1"/>
    <property type="molecule type" value="Genomic_DNA"/>
</dbReference>
<dbReference type="RefSeq" id="NP_635863.1">
    <property type="nucleotide sequence ID" value="NC_003902.1"/>
</dbReference>
<dbReference type="RefSeq" id="WP_011035722.1">
    <property type="nucleotide sequence ID" value="NC_003902.1"/>
</dbReference>
<dbReference type="PDB" id="4HKM">
    <property type="method" value="X-ray"/>
    <property type="resolution" value="1.95 A"/>
    <property type="chains" value="A/B=1-345"/>
</dbReference>
<dbReference type="PDBsum" id="4HKM"/>
<dbReference type="SMR" id="Q8PD71"/>
<dbReference type="STRING" id="190485.XCC0469"/>
<dbReference type="DNASU" id="998756"/>
<dbReference type="EnsemblBacteria" id="AAM39787">
    <property type="protein sequence ID" value="AAM39787"/>
    <property type="gene ID" value="XCC0469"/>
</dbReference>
<dbReference type="KEGG" id="xcc:XCC0469"/>
<dbReference type="PATRIC" id="fig|190485.4.peg.516"/>
<dbReference type="eggNOG" id="COG0547">
    <property type="taxonomic scope" value="Bacteria"/>
</dbReference>
<dbReference type="HOGENOM" id="CLU_034315_2_1_6"/>
<dbReference type="OrthoDB" id="9806430at2"/>
<dbReference type="UniPathway" id="UPA00035">
    <property type="reaction ID" value="UER00041"/>
</dbReference>
<dbReference type="EvolutionaryTrace" id="Q8PD71"/>
<dbReference type="Proteomes" id="UP000001010">
    <property type="component" value="Chromosome"/>
</dbReference>
<dbReference type="GO" id="GO:0005829">
    <property type="term" value="C:cytosol"/>
    <property type="evidence" value="ECO:0000318"/>
    <property type="project" value="GO_Central"/>
</dbReference>
<dbReference type="GO" id="GO:0004048">
    <property type="term" value="F:anthranilate phosphoribosyltransferase activity"/>
    <property type="evidence" value="ECO:0007669"/>
    <property type="project" value="UniProtKB-UniRule"/>
</dbReference>
<dbReference type="GO" id="GO:0000287">
    <property type="term" value="F:magnesium ion binding"/>
    <property type="evidence" value="ECO:0007669"/>
    <property type="project" value="UniProtKB-UniRule"/>
</dbReference>
<dbReference type="GO" id="GO:0000162">
    <property type="term" value="P:L-tryptophan biosynthetic process"/>
    <property type="evidence" value="ECO:0000318"/>
    <property type="project" value="GO_Central"/>
</dbReference>
<dbReference type="FunFam" id="1.20.970.10:FF:000006">
    <property type="entry name" value="Anthranilate phosphoribosyltransferase"/>
    <property type="match status" value="1"/>
</dbReference>
<dbReference type="FunFam" id="3.40.1030.10:FF:000002">
    <property type="entry name" value="Anthranilate phosphoribosyltransferase"/>
    <property type="match status" value="1"/>
</dbReference>
<dbReference type="Gene3D" id="3.40.1030.10">
    <property type="entry name" value="Nucleoside phosphorylase/phosphoribosyltransferase catalytic domain"/>
    <property type="match status" value="1"/>
</dbReference>
<dbReference type="Gene3D" id="1.20.970.10">
    <property type="entry name" value="Transferase, Pyrimidine Nucleoside Phosphorylase, Chain C"/>
    <property type="match status" value="1"/>
</dbReference>
<dbReference type="HAMAP" id="MF_00211">
    <property type="entry name" value="TrpD"/>
    <property type="match status" value="1"/>
</dbReference>
<dbReference type="InterPro" id="IPR005940">
    <property type="entry name" value="Anthranilate_Pribosyl_Tfrase"/>
</dbReference>
<dbReference type="InterPro" id="IPR000312">
    <property type="entry name" value="Glycosyl_Trfase_fam3"/>
</dbReference>
<dbReference type="InterPro" id="IPR017459">
    <property type="entry name" value="Glycosyl_Trfase_fam3_N_dom"/>
</dbReference>
<dbReference type="InterPro" id="IPR036320">
    <property type="entry name" value="Glycosyl_Trfase_fam3_N_dom_sf"/>
</dbReference>
<dbReference type="InterPro" id="IPR035902">
    <property type="entry name" value="Nuc_phospho_transferase"/>
</dbReference>
<dbReference type="NCBIfam" id="TIGR01245">
    <property type="entry name" value="trpD"/>
    <property type="match status" value="1"/>
</dbReference>
<dbReference type="PANTHER" id="PTHR43285">
    <property type="entry name" value="ANTHRANILATE PHOSPHORIBOSYLTRANSFERASE"/>
    <property type="match status" value="1"/>
</dbReference>
<dbReference type="PANTHER" id="PTHR43285:SF2">
    <property type="entry name" value="ANTHRANILATE PHOSPHORIBOSYLTRANSFERASE"/>
    <property type="match status" value="1"/>
</dbReference>
<dbReference type="Pfam" id="PF02885">
    <property type="entry name" value="Glycos_trans_3N"/>
    <property type="match status" value="1"/>
</dbReference>
<dbReference type="Pfam" id="PF00591">
    <property type="entry name" value="Glycos_transf_3"/>
    <property type="match status" value="1"/>
</dbReference>
<dbReference type="SUPFAM" id="SSF52418">
    <property type="entry name" value="Nucleoside phosphorylase/phosphoribosyltransferase catalytic domain"/>
    <property type="match status" value="1"/>
</dbReference>
<dbReference type="SUPFAM" id="SSF47648">
    <property type="entry name" value="Nucleoside phosphorylase/phosphoribosyltransferase N-terminal domain"/>
    <property type="match status" value="1"/>
</dbReference>
<accession>Q8PD71</accession>
<reference key="1">
    <citation type="journal article" date="2002" name="Nature">
        <title>Comparison of the genomes of two Xanthomonas pathogens with differing host specificities.</title>
        <authorList>
            <person name="da Silva A.C.R."/>
            <person name="Ferro J.A."/>
            <person name="Reinach F.C."/>
            <person name="Farah C.S."/>
            <person name="Furlan L.R."/>
            <person name="Quaggio R.B."/>
            <person name="Monteiro-Vitorello C.B."/>
            <person name="Van Sluys M.A."/>
            <person name="Almeida N.F. Jr."/>
            <person name="Alves L.M.C."/>
            <person name="do Amaral A.M."/>
            <person name="Bertolini M.C."/>
            <person name="Camargo L.E.A."/>
            <person name="Camarotte G."/>
            <person name="Cannavan F."/>
            <person name="Cardozo J."/>
            <person name="Chambergo F."/>
            <person name="Ciapina L.P."/>
            <person name="Cicarelli R.M.B."/>
            <person name="Coutinho L.L."/>
            <person name="Cursino-Santos J.R."/>
            <person name="El-Dorry H."/>
            <person name="Faria J.B."/>
            <person name="Ferreira A.J.S."/>
            <person name="Ferreira R.C.C."/>
            <person name="Ferro M.I.T."/>
            <person name="Formighieri E.F."/>
            <person name="Franco M.C."/>
            <person name="Greggio C.C."/>
            <person name="Gruber A."/>
            <person name="Katsuyama A.M."/>
            <person name="Kishi L.T."/>
            <person name="Leite R.P."/>
            <person name="Lemos E.G.M."/>
            <person name="Lemos M.V.F."/>
            <person name="Locali E.C."/>
            <person name="Machado M.A."/>
            <person name="Madeira A.M.B.N."/>
            <person name="Martinez-Rossi N.M."/>
            <person name="Martins E.C."/>
            <person name="Meidanis J."/>
            <person name="Menck C.F.M."/>
            <person name="Miyaki C.Y."/>
            <person name="Moon D.H."/>
            <person name="Moreira L.M."/>
            <person name="Novo M.T.M."/>
            <person name="Okura V.K."/>
            <person name="Oliveira M.C."/>
            <person name="Oliveira V.R."/>
            <person name="Pereira H.A."/>
            <person name="Rossi A."/>
            <person name="Sena J.A.D."/>
            <person name="Silva C."/>
            <person name="de Souza R.F."/>
            <person name="Spinola L.A.F."/>
            <person name="Takita M.A."/>
            <person name="Tamura R.E."/>
            <person name="Teixeira E.C."/>
            <person name="Tezza R.I.D."/>
            <person name="Trindade dos Santos M."/>
            <person name="Truffi D."/>
            <person name="Tsai S.M."/>
            <person name="White F.F."/>
            <person name="Setubal J.C."/>
            <person name="Kitajima J.P."/>
        </authorList>
    </citation>
    <scope>NUCLEOTIDE SEQUENCE [LARGE SCALE GENOMIC DNA]</scope>
    <source>
        <strain>ATCC 33913 / DSM 3586 / NCPPB 528 / LMG 568 / P 25</strain>
    </source>
</reference>
<reference key="2">
    <citation type="submission" date="2012-10" db="PDB data bank">
        <title>Crystal structure of an anthranilate phosphoribosyltransferase (target ID NYSGRC-016600) from Xanthomonas campestris.</title>
        <authorList>
            <consortium name="New York structural genomics research consortium (NYSGRC)"/>
        </authorList>
    </citation>
    <scope>X-RAY CRYSTALLOGRAPHY (1.95 ANGSTROMS) IN COMPLEX WITH PHOSPHATE</scope>
    <scope>SUBUNIT</scope>
</reference>